<proteinExistence type="inferred from homology"/>
<sequence>GYVNGLESAEETLAENRESGDFGSSAAAMGNVTHNGCGHYLHTLFWENMDPNGGGEPEGELLDRIEEDFGSYEGWKGEFEAAASAAGGWALLVYDPVAKQLRNVPVDKHDQGALWGSHPILALDVWEHSYYYDYGPARGDFIDA</sequence>
<keyword id="KW-0464">Manganese</keyword>
<keyword id="KW-0479">Metal-binding</keyword>
<keyword id="KW-0560">Oxidoreductase</keyword>
<feature type="chain" id="PRO_0000160118" description="Superoxide dismutase [Mn]">
    <location>
        <begin position="1" status="less than"/>
        <end position="144" status="greater than"/>
    </location>
</feature>
<feature type="region of interest" description="Disordered" evidence="2">
    <location>
        <begin position="1"/>
        <end position="22"/>
    </location>
</feature>
<feature type="binding site" evidence="1">
    <location>
        <position position="42"/>
    </location>
    <ligand>
        <name>Mn(2+)</name>
        <dbReference type="ChEBI" id="CHEBI:29035"/>
    </ligand>
</feature>
<feature type="binding site" evidence="1">
    <location>
        <position position="124"/>
    </location>
    <ligand>
        <name>Mn(2+)</name>
        <dbReference type="ChEBI" id="CHEBI:29035"/>
    </ligand>
</feature>
<feature type="binding site" evidence="1">
    <location>
        <position position="128"/>
    </location>
    <ligand>
        <name>Mn(2+)</name>
        <dbReference type="ChEBI" id="CHEBI:29035"/>
    </ligand>
</feature>
<feature type="non-terminal residue">
    <location>
        <position position="1"/>
    </location>
</feature>
<feature type="non-terminal residue">
    <location>
        <position position="144"/>
    </location>
</feature>
<comment type="function">
    <text>Destroys superoxide anion radicals which are normally produced within the cells and which are toxic to biological systems.</text>
</comment>
<comment type="catalytic activity">
    <reaction>
        <text>2 superoxide + 2 H(+) = H2O2 + O2</text>
        <dbReference type="Rhea" id="RHEA:20696"/>
        <dbReference type="ChEBI" id="CHEBI:15378"/>
        <dbReference type="ChEBI" id="CHEBI:15379"/>
        <dbReference type="ChEBI" id="CHEBI:16240"/>
        <dbReference type="ChEBI" id="CHEBI:18421"/>
        <dbReference type="EC" id="1.15.1.1"/>
    </reaction>
</comment>
<comment type="cofactor">
    <cofactor evidence="1">
        <name>Mn(2+)</name>
        <dbReference type="ChEBI" id="CHEBI:29035"/>
    </cofactor>
    <text evidence="1">Binds 1 Mn(2+) ion per subunit.</text>
</comment>
<comment type="similarity">
    <text evidence="3">Belongs to the iron/manganese superoxide dismutase family.</text>
</comment>
<organism>
    <name type="scientific">Haloarcula hispanica</name>
    <dbReference type="NCBI Taxonomy" id="51589"/>
    <lineage>
        <taxon>Archaea</taxon>
        <taxon>Methanobacteriati</taxon>
        <taxon>Methanobacteriota</taxon>
        <taxon>Stenosarchaea group</taxon>
        <taxon>Halobacteria</taxon>
        <taxon>Halobacteriales</taxon>
        <taxon>Haloarculaceae</taxon>
        <taxon>Haloarcula</taxon>
    </lineage>
</organism>
<dbReference type="EC" id="1.15.1.1"/>
<dbReference type="EMBL" id="U78906">
    <property type="protein sequence ID" value="AAB60930.1"/>
    <property type="molecule type" value="Genomic_DNA"/>
</dbReference>
<dbReference type="PIR" id="T44915">
    <property type="entry name" value="T44915"/>
</dbReference>
<dbReference type="SMR" id="O08459"/>
<dbReference type="GO" id="GO:0046872">
    <property type="term" value="F:metal ion binding"/>
    <property type="evidence" value="ECO:0007669"/>
    <property type="project" value="UniProtKB-KW"/>
</dbReference>
<dbReference type="GO" id="GO:0004784">
    <property type="term" value="F:superoxide dismutase activity"/>
    <property type="evidence" value="ECO:0007669"/>
    <property type="project" value="UniProtKB-EC"/>
</dbReference>
<dbReference type="Gene3D" id="1.10.287.990">
    <property type="entry name" value="Fe,Mn superoxide dismutase (SOD) domain"/>
    <property type="match status" value="1"/>
</dbReference>
<dbReference type="Gene3D" id="3.55.40.20">
    <property type="entry name" value="Iron/manganese superoxide dismutase, C-terminal domain"/>
    <property type="match status" value="1"/>
</dbReference>
<dbReference type="InterPro" id="IPR050265">
    <property type="entry name" value="Fe/Mn_Superoxide_Dismutase"/>
</dbReference>
<dbReference type="InterPro" id="IPR001189">
    <property type="entry name" value="Mn/Fe_SOD"/>
</dbReference>
<dbReference type="InterPro" id="IPR019833">
    <property type="entry name" value="Mn/Fe_SOD_BS"/>
</dbReference>
<dbReference type="InterPro" id="IPR019832">
    <property type="entry name" value="Mn/Fe_SOD_C"/>
</dbReference>
<dbReference type="InterPro" id="IPR019831">
    <property type="entry name" value="Mn/Fe_SOD_N"/>
</dbReference>
<dbReference type="InterPro" id="IPR036324">
    <property type="entry name" value="Mn/Fe_SOD_N_sf"/>
</dbReference>
<dbReference type="InterPro" id="IPR036314">
    <property type="entry name" value="SOD_C_sf"/>
</dbReference>
<dbReference type="PANTHER" id="PTHR11404">
    <property type="entry name" value="SUPEROXIDE DISMUTASE 2"/>
    <property type="match status" value="1"/>
</dbReference>
<dbReference type="PANTHER" id="PTHR11404:SF6">
    <property type="entry name" value="SUPEROXIDE DISMUTASE [MN], MITOCHONDRIAL"/>
    <property type="match status" value="1"/>
</dbReference>
<dbReference type="Pfam" id="PF02777">
    <property type="entry name" value="Sod_Fe_C"/>
    <property type="match status" value="1"/>
</dbReference>
<dbReference type="Pfam" id="PF00081">
    <property type="entry name" value="Sod_Fe_N"/>
    <property type="match status" value="1"/>
</dbReference>
<dbReference type="PRINTS" id="PR01703">
    <property type="entry name" value="MNSODISMTASE"/>
</dbReference>
<dbReference type="SUPFAM" id="SSF54719">
    <property type="entry name" value="Fe,Mn superoxide dismutase (SOD), C-terminal domain"/>
    <property type="match status" value="1"/>
</dbReference>
<dbReference type="SUPFAM" id="SSF46609">
    <property type="entry name" value="Fe,Mn superoxide dismutase (SOD), N-terminal domain"/>
    <property type="match status" value="1"/>
</dbReference>
<dbReference type="PROSITE" id="PS00088">
    <property type="entry name" value="SOD_MN"/>
    <property type="match status" value="1"/>
</dbReference>
<evidence type="ECO:0000250" key="1"/>
<evidence type="ECO:0000256" key="2">
    <source>
        <dbReference type="SAM" id="MobiDB-lite"/>
    </source>
</evidence>
<evidence type="ECO:0000305" key="3"/>
<gene>
    <name type="primary">sod</name>
</gene>
<protein>
    <recommendedName>
        <fullName>Superoxide dismutase [Mn]</fullName>
        <ecNumber>1.15.1.1</ecNumber>
    </recommendedName>
</protein>
<name>SODM_HALHI</name>
<reference key="1">
    <citation type="journal article" date="1997" name="Microbiol. Mol. Biol. Rev.">
        <title>Evolutionary divergence and salinity-mediated selection in halophilic archaea.</title>
        <authorList>
            <person name="Dennis P.P."/>
            <person name="Shimmin L.C."/>
        </authorList>
    </citation>
    <scope>NUCLEOTIDE SEQUENCE [GENOMIC DNA]</scope>
</reference>
<accession>O08459</accession>